<sequence length="388" mass="42712">MKNREYQQIDPQALATPTPTPPPRSLPEHKPRRARRKWEVFPGKNRFYCDGRIIVARQSGVLPLTLGLILLTSGLFFIFDCPFLVKHLTSCIPAIGGVLFVFVIISLLQTSFTDPGILPRATPEEAADIEKQIDNPTGSSSSYRPPPRTKEVVINQQVVKLKYCFTCKIFRPPRTSHCSLCDNCVERFDHHCPWVGNCVGKRNYRFFYTFIVSLSFLTAFIFGCVTTHLALRSQGGNGLVNALQSSPASALELVVCFFSVWSILGLSGFHTYLVAANLTTNEDIKGSWSGKSGNEDVGNPYSYNSMIKNCCSVLCGPMPPSLIDRRGFVPSDDSVQTSPVEIELPAAKNDINMVGRAVTSGRPPPPPPPPLVVTLQQPAISMQNHSTA</sequence>
<dbReference type="EC" id="2.3.1.225" evidence="2"/>
<dbReference type="EMBL" id="CABZ01038313">
    <property type="status" value="NOT_ANNOTATED_CDS"/>
    <property type="molecule type" value="Genomic_DNA"/>
</dbReference>
<dbReference type="EMBL" id="CABZ01038314">
    <property type="status" value="NOT_ANNOTATED_CDS"/>
    <property type="molecule type" value="Genomic_DNA"/>
</dbReference>
<dbReference type="EMBL" id="CABZ01050708">
    <property type="status" value="NOT_ANNOTATED_CDS"/>
    <property type="molecule type" value="Genomic_DNA"/>
</dbReference>
<dbReference type="EMBL" id="LO018558">
    <property type="status" value="NOT_ANNOTATED_CDS"/>
    <property type="molecule type" value="Genomic_DNA"/>
</dbReference>
<dbReference type="EMBL" id="BC045475">
    <property type="protein sequence ID" value="AAH45475.1"/>
    <property type="molecule type" value="mRNA"/>
</dbReference>
<dbReference type="RefSeq" id="NP_999872.1">
    <property type="nucleotide sequence ID" value="NM_214707.1"/>
</dbReference>
<dbReference type="SMR" id="Q7ZVN4"/>
<dbReference type="FunCoup" id="Q7ZVN4">
    <property type="interactions" value="728"/>
</dbReference>
<dbReference type="PaxDb" id="7955-ENSDARP00000048322"/>
<dbReference type="Ensembl" id="ENSDART00000161965">
    <property type="protein sequence ID" value="ENSDARP00000136991"/>
    <property type="gene ID" value="ENSDARG00000105034"/>
</dbReference>
<dbReference type="GeneID" id="334383"/>
<dbReference type="KEGG" id="dre:334383"/>
<dbReference type="AGR" id="ZFIN:ZDB-GENE-030131-6315"/>
<dbReference type="CTD" id="334383"/>
<dbReference type="ZFIN" id="ZDB-GENE-030131-6315">
    <property type="gene designation" value="zdhhc18b"/>
</dbReference>
<dbReference type="eggNOG" id="KOG1311">
    <property type="taxonomic scope" value="Eukaryota"/>
</dbReference>
<dbReference type="HOGENOM" id="CLU_018741_3_1_1"/>
<dbReference type="InParanoid" id="Q7ZVN4"/>
<dbReference type="OMA" id="PSSHDGN"/>
<dbReference type="OrthoDB" id="4096362at2759"/>
<dbReference type="PhylomeDB" id="Q7ZVN4"/>
<dbReference type="PRO" id="PR:Q7ZVN4"/>
<dbReference type="Proteomes" id="UP000000437">
    <property type="component" value="Chromosome 19"/>
</dbReference>
<dbReference type="Bgee" id="ENSDARG00000105034">
    <property type="expression patterns" value="Expressed in cleaving embryo and 26 other cell types or tissues"/>
</dbReference>
<dbReference type="GO" id="GO:0005783">
    <property type="term" value="C:endoplasmic reticulum"/>
    <property type="evidence" value="ECO:0000318"/>
    <property type="project" value="GO_Central"/>
</dbReference>
<dbReference type="GO" id="GO:0005794">
    <property type="term" value="C:Golgi apparatus"/>
    <property type="evidence" value="ECO:0000250"/>
    <property type="project" value="UniProtKB"/>
</dbReference>
<dbReference type="GO" id="GO:0000139">
    <property type="term" value="C:Golgi membrane"/>
    <property type="evidence" value="ECO:0007669"/>
    <property type="project" value="UniProtKB-SubCell"/>
</dbReference>
<dbReference type="GO" id="GO:0019706">
    <property type="term" value="F:protein-cysteine S-palmitoyltransferase activity"/>
    <property type="evidence" value="ECO:0000250"/>
    <property type="project" value="UniProtKB"/>
</dbReference>
<dbReference type="GO" id="GO:0045824">
    <property type="term" value="P:negative regulation of innate immune response"/>
    <property type="evidence" value="ECO:0000250"/>
    <property type="project" value="UniProtKB"/>
</dbReference>
<dbReference type="GO" id="GO:0006612">
    <property type="term" value="P:protein targeting to membrane"/>
    <property type="evidence" value="ECO:0000318"/>
    <property type="project" value="GO_Central"/>
</dbReference>
<dbReference type="InterPro" id="IPR001594">
    <property type="entry name" value="Palmitoyltrfase_DHHC"/>
</dbReference>
<dbReference type="InterPro" id="IPR039859">
    <property type="entry name" value="PFA4/ZDH16/20/ERF2-like"/>
</dbReference>
<dbReference type="PANTHER" id="PTHR22883:SF348">
    <property type="entry name" value="PALMITOYLTRANSFERASE ZDHHC18-B"/>
    <property type="match status" value="1"/>
</dbReference>
<dbReference type="PANTHER" id="PTHR22883">
    <property type="entry name" value="ZINC FINGER DHHC DOMAIN CONTAINING PROTEIN"/>
    <property type="match status" value="1"/>
</dbReference>
<dbReference type="Pfam" id="PF01529">
    <property type="entry name" value="DHHC"/>
    <property type="match status" value="1"/>
</dbReference>
<dbReference type="PROSITE" id="PS50216">
    <property type="entry name" value="DHHC"/>
    <property type="match status" value="1"/>
</dbReference>
<organism>
    <name type="scientific">Danio rerio</name>
    <name type="common">Zebrafish</name>
    <name type="synonym">Brachydanio rerio</name>
    <dbReference type="NCBI Taxonomy" id="7955"/>
    <lineage>
        <taxon>Eukaryota</taxon>
        <taxon>Metazoa</taxon>
        <taxon>Chordata</taxon>
        <taxon>Craniata</taxon>
        <taxon>Vertebrata</taxon>
        <taxon>Euteleostomi</taxon>
        <taxon>Actinopterygii</taxon>
        <taxon>Neopterygii</taxon>
        <taxon>Teleostei</taxon>
        <taxon>Ostariophysi</taxon>
        <taxon>Cypriniformes</taxon>
        <taxon>Danionidae</taxon>
        <taxon>Danioninae</taxon>
        <taxon>Danio</taxon>
    </lineage>
</organism>
<keyword id="KW-0012">Acyltransferase</keyword>
<keyword id="KW-0333">Golgi apparatus</keyword>
<keyword id="KW-0449">Lipoprotein</keyword>
<keyword id="KW-0472">Membrane</keyword>
<keyword id="KW-0564">Palmitate</keyword>
<keyword id="KW-0597">Phosphoprotein</keyword>
<keyword id="KW-1185">Reference proteome</keyword>
<keyword id="KW-0808">Transferase</keyword>
<keyword id="KW-0812">Transmembrane</keyword>
<keyword id="KW-1133">Transmembrane helix</keyword>
<protein>
    <recommendedName>
        <fullName evidence="8">Palmitoyltransferase ZDHHC18-B</fullName>
        <ecNumber evidence="2">2.3.1.225</ecNumber>
    </recommendedName>
    <alternativeName>
        <fullName evidence="7">Zinc finger DHHC domain-containing protein 18-B</fullName>
    </alternativeName>
</protein>
<feature type="chain" id="PRO_0000451103" description="Palmitoyltransferase ZDHHC18-B">
    <location>
        <begin position="1"/>
        <end position="388"/>
    </location>
</feature>
<feature type="topological domain" description="Cytoplasmic" evidence="8">
    <location>
        <begin position="1"/>
        <end position="58"/>
    </location>
</feature>
<feature type="transmembrane region" description="Helical" evidence="3">
    <location>
        <begin position="59"/>
        <end position="79"/>
    </location>
</feature>
<feature type="topological domain" description="Lumenal" evidence="8">
    <location>
        <begin position="80"/>
        <end position="87"/>
    </location>
</feature>
<feature type="transmembrane region" description="Helical" evidence="3">
    <location>
        <begin position="88"/>
        <end position="108"/>
    </location>
</feature>
<feature type="topological domain" description="Cytoplasmic" evidence="8">
    <location>
        <begin position="109"/>
        <end position="205"/>
    </location>
</feature>
<feature type="transmembrane region" description="Helical" evidence="3">
    <location>
        <begin position="206"/>
        <end position="226"/>
    </location>
</feature>
<feature type="topological domain" description="Lumenal" evidence="8">
    <location>
        <begin position="227"/>
        <end position="253"/>
    </location>
</feature>
<feature type="transmembrane region" description="Helical" evidence="3">
    <location>
        <begin position="254"/>
        <end position="274"/>
    </location>
</feature>
<feature type="topological domain" description="Cytoplasmic" evidence="8">
    <location>
        <begin position="275"/>
        <end position="388"/>
    </location>
</feature>
<feature type="domain" description="DHHC" evidence="4">
    <location>
        <begin position="162"/>
        <end position="212"/>
    </location>
</feature>
<feature type="region of interest" description="Disordered" evidence="5">
    <location>
        <begin position="1"/>
        <end position="33"/>
    </location>
</feature>
<feature type="active site" description="S-palmitoyl cysteine intermediate" evidence="4">
    <location>
        <position position="192"/>
    </location>
</feature>
<evidence type="ECO:0000250" key="1">
    <source>
        <dbReference type="UniProtKB" id="Q8IUH5"/>
    </source>
</evidence>
<evidence type="ECO:0000250" key="2">
    <source>
        <dbReference type="UniProtKB" id="Q9NUE0"/>
    </source>
</evidence>
<evidence type="ECO:0000255" key="3"/>
<evidence type="ECO:0000255" key="4">
    <source>
        <dbReference type="PROSITE-ProRule" id="PRU00067"/>
    </source>
</evidence>
<evidence type="ECO:0000256" key="5">
    <source>
        <dbReference type="SAM" id="MobiDB-lite"/>
    </source>
</evidence>
<evidence type="ECO:0000269" key="6">
    <source>
    </source>
</evidence>
<evidence type="ECO:0000303" key="7">
    <source>
    </source>
</evidence>
<evidence type="ECO:0000305" key="8"/>
<evidence type="ECO:0000312" key="9">
    <source>
        <dbReference type="EMBL" id="AAH45475.1"/>
    </source>
</evidence>
<evidence type="ECO:0000312" key="10">
    <source>
        <dbReference type="ZFIN" id="ZDB-GENE-030131-6315"/>
    </source>
</evidence>
<name>ZD18B_DANRE</name>
<proteinExistence type="evidence at transcript level"/>
<gene>
    <name evidence="7 10" type="primary">zdhhc18b</name>
    <name evidence="9" type="synonym">zgc:55843</name>
</gene>
<comment type="function">
    <text evidence="2">Palmitoyltransferase that catalyzes the addition of palmitate onto various protein substrates, such as CGAS, HRAS and LCK.</text>
</comment>
<comment type="catalytic activity">
    <reaction evidence="2">
        <text>L-cysteinyl-[protein] + hexadecanoyl-CoA = S-hexadecanoyl-L-cysteinyl-[protein] + CoA</text>
        <dbReference type="Rhea" id="RHEA:36683"/>
        <dbReference type="Rhea" id="RHEA-COMP:10131"/>
        <dbReference type="Rhea" id="RHEA-COMP:11032"/>
        <dbReference type="ChEBI" id="CHEBI:29950"/>
        <dbReference type="ChEBI" id="CHEBI:57287"/>
        <dbReference type="ChEBI" id="CHEBI:57379"/>
        <dbReference type="ChEBI" id="CHEBI:74151"/>
        <dbReference type="EC" id="2.3.1.225"/>
    </reaction>
    <physiologicalReaction direction="left-to-right" evidence="2">
        <dbReference type="Rhea" id="RHEA:36684"/>
    </physiologicalReaction>
</comment>
<comment type="subcellular location">
    <subcellularLocation>
        <location evidence="2">Golgi apparatus membrane</location>
        <topology evidence="3">Multi-pass membrane protein</topology>
    </subcellularLocation>
</comment>
<comment type="developmental stage">
    <text evidence="6">Probably maternally supplied, the zygotic expression becomes significant at 4 hpf.</text>
</comment>
<comment type="domain">
    <text evidence="1">The DHHC domain is required for palmitoyltransferase activity.</text>
</comment>
<comment type="similarity">
    <text evidence="8">Belongs to the DHHC palmitoyltransferase family. ERF2/ZDHHC9 subfamily.</text>
</comment>
<accession>Q7ZVN4</accession>
<reference key="1">
    <citation type="journal article" date="2013" name="Nature">
        <title>The zebrafish reference genome sequence and its relationship to the human genome.</title>
        <authorList>
            <person name="Howe K."/>
            <person name="Clark M.D."/>
            <person name="Torroja C.F."/>
            <person name="Torrance J."/>
            <person name="Berthelot C."/>
            <person name="Muffato M."/>
            <person name="Collins J.E."/>
            <person name="Humphray S."/>
            <person name="McLaren K."/>
            <person name="Matthews L."/>
            <person name="McLaren S."/>
            <person name="Sealy I."/>
            <person name="Caccamo M."/>
            <person name="Churcher C."/>
            <person name="Scott C."/>
            <person name="Barrett J.C."/>
            <person name="Koch R."/>
            <person name="Rauch G.J."/>
            <person name="White S."/>
            <person name="Chow W."/>
            <person name="Kilian B."/>
            <person name="Quintais L.T."/>
            <person name="Guerra-Assuncao J.A."/>
            <person name="Zhou Y."/>
            <person name="Gu Y."/>
            <person name="Yen J."/>
            <person name="Vogel J.H."/>
            <person name="Eyre T."/>
            <person name="Redmond S."/>
            <person name="Banerjee R."/>
            <person name="Chi J."/>
            <person name="Fu B."/>
            <person name="Langley E."/>
            <person name="Maguire S.F."/>
            <person name="Laird G.K."/>
            <person name="Lloyd D."/>
            <person name="Kenyon E."/>
            <person name="Donaldson S."/>
            <person name="Sehra H."/>
            <person name="Almeida-King J."/>
            <person name="Loveland J."/>
            <person name="Trevanion S."/>
            <person name="Jones M."/>
            <person name="Quail M."/>
            <person name="Willey D."/>
            <person name="Hunt A."/>
            <person name="Burton J."/>
            <person name="Sims S."/>
            <person name="McLay K."/>
            <person name="Plumb B."/>
            <person name="Davis J."/>
            <person name="Clee C."/>
            <person name="Oliver K."/>
            <person name="Clark R."/>
            <person name="Riddle C."/>
            <person name="Elliot D."/>
            <person name="Threadgold G."/>
            <person name="Harden G."/>
            <person name="Ware D."/>
            <person name="Begum S."/>
            <person name="Mortimore B."/>
            <person name="Kerry G."/>
            <person name="Heath P."/>
            <person name="Phillimore B."/>
            <person name="Tracey A."/>
            <person name="Corby N."/>
            <person name="Dunn M."/>
            <person name="Johnson C."/>
            <person name="Wood J."/>
            <person name="Clark S."/>
            <person name="Pelan S."/>
            <person name="Griffiths G."/>
            <person name="Smith M."/>
            <person name="Glithero R."/>
            <person name="Howden P."/>
            <person name="Barker N."/>
            <person name="Lloyd C."/>
            <person name="Stevens C."/>
            <person name="Harley J."/>
            <person name="Holt K."/>
            <person name="Panagiotidis G."/>
            <person name="Lovell J."/>
            <person name="Beasley H."/>
            <person name="Henderson C."/>
            <person name="Gordon D."/>
            <person name="Auger K."/>
            <person name="Wright D."/>
            <person name="Collins J."/>
            <person name="Raisen C."/>
            <person name="Dyer L."/>
            <person name="Leung K."/>
            <person name="Robertson L."/>
            <person name="Ambridge K."/>
            <person name="Leongamornlert D."/>
            <person name="McGuire S."/>
            <person name="Gilderthorp R."/>
            <person name="Griffiths C."/>
            <person name="Manthravadi D."/>
            <person name="Nichol S."/>
            <person name="Barker G."/>
            <person name="Whitehead S."/>
            <person name="Kay M."/>
            <person name="Brown J."/>
            <person name="Murnane C."/>
            <person name="Gray E."/>
            <person name="Humphries M."/>
            <person name="Sycamore N."/>
            <person name="Barker D."/>
            <person name="Saunders D."/>
            <person name="Wallis J."/>
            <person name="Babbage A."/>
            <person name="Hammond S."/>
            <person name="Mashreghi-Mohammadi M."/>
            <person name="Barr L."/>
            <person name="Martin S."/>
            <person name="Wray P."/>
            <person name="Ellington A."/>
            <person name="Matthews N."/>
            <person name="Ellwood M."/>
            <person name="Woodmansey R."/>
            <person name="Clark G."/>
            <person name="Cooper J."/>
            <person name="Tromans A."/>
            <person name="Grafham D."/>
            <person name="Skuce C."/>
            <person name="Pandian R."/>
            <person name="Andrews R."/>
            <person name="Harrison E."/>
            <person name="Kimberley A."/>
            <person name="Garnett J."/>
            <person name="Fosker N."/>
            <person name="Hall R."/>
            <person name="Garner P."/>
            <person name="Kelly D."/>
            <person name="Bird C."/>
            <person name="Palmer S."/>
            <person name="Gehring I."/>
            <person name="Berger A."/>
            <person name="Dooley C.M."/>
            <person name="Ersan-Urun Z."/>
            <person name="Eser C."/>
            <person name="Geiger H."/>
            <person name="Geisler M."/>
            <person name="Karotki L."/>
            <person name="Kirn A."/>
            <person name="Konantz J."/>
            <person name="Konantz M."/>
            <person name="Oberlander M."/>
            <person name="Rudolph-Geiger S."/>
            <person name="Teucke M."/>
            <person name="Lanz C."/>
            <person name="Raddatz G."/>
            <person name="Osoegawa K."/>
            <person name="Zhu B."/>
            <person name="Rapp A."/>
            <person name="Widaa S."/>
            <person name="Langford C."/>
            <person name="Yang F."/>
            <person name="Schuster S.C."/>
            <person name="Carter N.P."/>
            <person name="Harrow J."/>
            <person name="Ning Z."/>
            <person name="Herrero J."/>
            <person name="Searle S.M."/>
            <person name="Enright A."/>
            <person name="Geisler R."/>
            <person name="Plasterk R.H."/>
            <person name="Lee C."/>
            <person name="Westerfield M."/>
            <person name="de Jong P.J."/>
            <person name="Zon L.I."/>
            <person name="Postlethwait J.H."/>
            <person name="Nusslein-Volhard C."/>
            <person name="Hubbard T.J."/>
            <person name="Roest Crollius H."/>
            <person name="Rogers J."/>
            <person name="Stemple D.L."/>
        </authorList>
    </citation>
    <scope>NUCLEOTIDE SEQUENCE [LARGE SCALE GENOMIC DNA]</scope>
    <source>
        <strain>Tuebingen</strain>
    </source>
</reference>
<reference key="2">
    <citation type="submission" date="2003-01" db="EMBL/GenBank/DDBJ databases">
        <authorList>
            <consortium name="NIH - Zebrafish Gene Collection (ZGC) project"/>
        </authorList>
    </citation>
    <scope>NUCLEOTIDE SEQUENCE [LARGE SCALE MRNA]</scope>
    <source>
        <strain>AB</strain>
        <tissue>Embryo</tissue>
    </source>
</reference>
<reference key="3">
    <citation type="journal article" date="2016" name="Biochem. Biophys. Res. Commun.">
        <title>Protein palmitoylation activate zygotic gene expression during the maternal-to-zygotic transition.</title>
        <authorList>
            <person name="Du Z."/>
            <person name="Chen X."/>
            <person name="Li X."/>
            <person name="He K."/>
            <person name="Ji S."/>
            <person name="Shi W."/>
            <person name="Hao A."/>
        </authorList>
    </citation>
    <scope>DEVELOPMENTAL STAGE</scope>
</reference>